<protein>
    <recommendedName>
        <fullName evidence="5">Drosulfakinins</fullName>
    </recommendedName>
    <component>
        <recommendedName>
            <fullName evidence="5">Drosulfakinin-0</fullName>
            <shortName evidence="5">DSK-0</shortName>
        </recommendedName>
    </component>
    <component>
        <recommendedName>
            <fullName evidence="5">Drosulfakinin-1</fullName>
        </recommendedName>
        <alternativeName>
            <fullName evidence="5">Drosulfakinin I</fullName>
            <shortName evidence="5">DSK-I</shortName>
        </alternativeName>
    </component>
    <component>
        <recommendedName>
            <fullName evidence="5">Drosulfakinin-2</fullName>
        </recommendedName>
        <alternativeName>
            <fullName evidence="5">Drosulfakinin II</fullName>
            <shortName evidence="5">DSK-II</shortName>
        </alternativeName>
    </component>
</protein>
<feature type="signal peptide" evidence="2">
    <location>
        <begin position="1"/>
        <end position="31"/>
    </location>
</feature>
<feature type="propeptide" id="PRO_0000351160" evidence="4">
    <location>
        <begin position="32"/>
        <end position="73"/>
    </location>
</feature>
<feature type="peptide" id="PRO_0000351161" description="Drosulfakinin-0" evidence="2 5">
    <location>
        <begin position="76"/>
        <end position="82"/>
    </location>
</feature>
<feature type="propeptide" id="PRO_0000351162" evidence="4">
    <location>
        <begin position="86"/>
        <end position="111"/>
    </location>
</feature>
<feature type="peptide" id="PRO_0000351163" description="Drosulfakinin-1" evidence="2 5">
    <location>
        <begin position="114"/>
        <end position="122"/>
    </location>
</feature>
<feature type="peptide" id="PRO_0000351164" description="Drosulfakinin-2" evidence="1">
    <location>
        <begin position="126"/>
        <end position="139"/>
    </location>
</feature>
<feature type="region of interest" description="Disordered" evidence="3">
    <location>
        <begin position="49"/>
        <end position="69"/>
    </location>
</feature>
<feature type="modified residue" description="Phenylalanine amide" evidence="2 5">
    <location>
        <position position="82"/>
    </location>
</feature>
<feature type="modified residue" description="Sulfotyrosine" evidence="2 5">
    <location>
        <position position="117"/>
    </location>
</feature>
<feature type="modified residue" description="Phenylalanine amide" evidence="2 5">
    <location>
        <position position="122"/>
    </location>
</feature>
<feature type="modified residue" description="Sulfotyrosine" evidence="1">
    <location>
        <position position="134"/>
    </location>
</feature>
<feature type="modified residue" description="Phenylalanine amide" evidence="1">
    <location>
        <position position="139"/>
    </location>
</feature>
<sequence length="141" mass="16292">MGLRRCTHFATLVMPLWALALFFLVVMQVPAQTTSLQISKEDRRLQELESKMGAESEQPNANLVGPSISRFGDRRNQKTISFGRRVPLISRPMIPIELDLLMDNDDERTKAKRFDDYGHMRFGKRGGDDQFDDYGHMRFGR</sequence>
<reference evidence="7" key="1">
    <citation type="submission" date="2008-04" db="EMBL/GenBank/DDBJ databases">
        <title>A molecular phylogeny for the Drosophila melanogaster subgroup.</title>
        <authorList>
            <person name="Ke F."/>
        </authorList>
    </citation>
    <scope>NUCLEOTIDE SEQUENCE [GENOMIC DNA]</scope>
</reference>
<reference evidence="8" key="2">
    <citation type="journal article" date="2007" name="Nature">
        <title>Evolution of genes and genomes on the Drosophila phylogeny.</title>
        <authorList>
            <consortium name="Drosophila 12 genomes consortium"/>
        </authorList>
    </citation>
    <scope>NUCLEOTIDE SEQUENCE [LARGE SCALE GENOMIC DNA]</scope>
    <source>
        <strain evidence="8">Tucson 14021-0224.01</strain>
    </source>
</reference>
<reference evidence="6" key="3">
    <citation type="journal article" date="2007" name="J. Insect Physiol.">
        <title>The drosulfakinin 0 (DSK 0) peptide encoded in the conserved Dsk gene affects adult Drosophila melanogaster crop contractions.</title>
        <authorList>
            <person name="Palmer G.C."/>
            <person name="Tran T."/>
            <person name="Duttlinger A."/>
            <person name="Nichols R."/>
        </authorList>
    </citation>
    <scope>IDENTIFICATION</scope>
    <scope>AMIDATION AT PHE-82 AND PHE-122</scope>
    <scope>SULFATION AT TYR-117</scope>
</reference>
<proteinExistence type="evidence at protein level"/>
<accession>B2ZB95</accession>
<comment type="function">
    <text evidence="1">Drosulfakinin-0 (DSK 0) plays diverse biological roles including regulating gut muscle contraction in adults but not in larvae.</text>
</comment>
<comment type="subcellular location">
    <subcellularLocation>
        <location evidence="1">Secreted</location>
    </subcellularLocation>
</comment>
<comment type="similarity">
    <text evidence="2">Belongs to the gastrin/cholecystokinin family.</text>
</comment>
<evidence type="ECO:0000250" key="1">
    <source>
        <dbReference type="UniProtKB" id="P09040"/>
    </source>
</evidence>
<evidence type="ECO:0000255" key="2"/>
<evidence type="ECO:0000256" key="3">
    <source>
        <dbReference type="SAM" id="MobiDB-lite"/>
    </source>
</evidence>
<evidence type="ECO:0000269" key="4">
    <source>
    </source>
</evidence>
<evidence type="ECO:0000303" key="5">
    <source>
    </source>
</evidence>
<evidence type="ECO:0000305" key="6"/>
<evidence type="ECO:0000312" key="7">
    <source>
        <dbReference type="EMBL" id="ACC99369.1"/>
    </source>
</evidence>
<evidence type="ECO:0000312" key="8">
    <source>
        <dbReference type="EMBL" id="EDV47739.1"/>
    </source>
</evidence>
<keyword id="KW-0027">Amidation</keyword>
<keyword id="KW-0165">Cleavage on pair of basic residues</keyword>
<keyword id="KW-0372">Hormone</keyword>
<keyword id="KW-0527">Neuropeptide</keyword>
<keyword id="KW-0964">Secreted</keyword>
<keyword id="KW-0732">Signal</keyword>
<keyword id="KW-0765">Sulfation</keyword>
<organism>
    <name type="scientific">Drosophila erecta</name>
    <name type="common">Fruit fly</name>
    <dbReference type="NCBI Taxonomy" id="7220"/>
    <lineage>
        <taxon>Eukaryota</taxon>
        <taxon>Metazoa</taxon>
        <taxon>Ecdysozoa</taxon>
        <taxon>Arthropoda</taxon>
        <taxon>Hexapoda</taxon>
        <taxon>Insecta</taxon>
        <taxon>Pterygota</taxon>
        <taxon>Neoptera</taxon>
        <taxon>Endopterygota</taxon>
        <taxon>Diptera</taxon>
        <taxon>Brachycera</taxon>
        <taxon>Muscomorpha</taxon>
        <taxon>Ephydroidea</taxon>
        <taxon>Drosophilidae</taxon>
        <taxon>Drosophila</taxon>
        <taxon>Sophophora</taxon>
    </lineage>
</organism>
<gene>
    <name evidence="7" type="primary">Dsk</name>
    <name type="ORF">GG11807</name>
</gene>
<name>DSK_DROER</name>
<dbReference type="EMBL" id="EU635460">
    <property type="protein sequence ID" value="ACC99369.1"/>
    <property type="molecule type" value="Genomic_DNA"/>
</dbReference>
<dbReference type="EMBL" id="CH954181">
    <property type="protein sequence ID" value="EDV47739.1"/>
    <property type="molecule type" value="Genomic_DNA"/>
</dbReference>
<dbReference type="SMR" id="B2ZB95"/>
<dbReference type="EnsemblMetazoa" id="FBtr0131861">
    <property type="protein sequence ID" value="FBpp0130353"/>
    <property type="gene ID" value="FBgn0104102"/>
</dbReference>
<dbReference type="EnsemblMetazoa" id="XM_001978745.3">
    <property type="protein sequence ID" value="XP_001978781.1"/>
    <property type="gene ID" value="LOC6552016"/>
</dbReference>
<dbReference type="GeneID" id="6552016"/>
<dbReference type="KEGG" id="der:6552016"/>
<dbReference type="eggNOG" id="ENOG502SESC">
    <property type="taxonomic scope" value="Eukaryota"/>
</dbReference>
<dbReference type="HOGENOM" id="CLU_1847224_0_0_1"/>
<dbReference type="OMA" id="FGDRRNQ"/>
<dbReference type="OrthoDB" id="6360815at2759"/>
<dbReference type="PhylomeDB" id="B2ZB95"/>
<dbReference type="Proteomes" id="UP000008711">
    <property type="component" value="Unassembled WGS sequence"/>
</dbReference>
<dbReference type="GO" id="GO:0005576">
    <property type="term" value="C:extracellular region"/>
    <property type="evidence" value="ECO:0007669"/>
    <property type="project" value="UniProtKB-SubCell"/>
</dbReference>
<dbReference type="GO" id="GO:0005184">
    <property type="term" value="F:neuropeptide hormone activity"/>
    <property type="evidence" value="ECO:0007669"/>
    <property type="project" value="EnsemblMetazoa"/>
</dbReference>
<dbReference type="GO" id="GO:0071855">
    <property type="term" value="F:neuropeptide receptor binding"/>
    <property type="evidence" value="ECO:0007669"/>
    <property type="project" value="EnsemblMetazoa"/>
</dbReference>
<dbReference type="GO" id="GO:0008343">
    <property type="term" value="P:adult feeding behavior"/>
    <property type="evidence" value="ECO:0007669"/>
    <property type="project" value="EnsemblMetazoa"/>
</dbReference>
<dbReference type="GO" id="GO:0008344">
    <property type="term" value="P:adult locomotory behavior"/>
    <property type="evidence" value="ECO:0007669"/>
    <property type="project" value="EnsemblMetazoa"/>
</dbReference>
<dbReference type="GO" id="GO:0002121">
    <property type="term" value="P:inter-male aggressive behavior"/>
    <property type="evidence" value="ECO:0007669"/>
    <property type="project" value="EnsemblMetazoa"/>
</dbReference>
<dbReference type="GO" id="GO:0008345">
    <property type="term" value="P:larval locomotory behavior"/>
    <property type="evidence" value="ECO:0007669"/>
    <property type="project" value="EnsemblMetazoa"/>
</dbReference>
<dbReference type="GO" id="GO:0033555">
    <property type="term" value="P:multicellular organismal response to stress"/>
    <property type="evidence" value="ECO:0007669"/>
    <property type="project" value="EnsemblMetazoa"/>
</dbReference>
<dbReference type="GO" id="GO:0007528">
    <property type="term" value="P:neuromuscular junction development"/>
    <property type="evidence" value="ECO:0007669"/>
    <property type="project" value="EnsemblMetazoa"/>
</dbReference>
<dbReference type="GO" id="GO:0007218">
    <property type="term" value="P:neuropeptide signaling pathway"/>
    <property type="evidence" value="ECO:0007669"/>
    <property type="project" value="UniProtKB-KW"/>
</dbReference>
<dbReference type="GO" id="GO:0007204">
    <property type="term" value="P:positive regulation of cytosolic calcium ion concentration"/>
    <property type="evidence" value="ECO:0007669"/>
    <property type="project" value="EnsemblMetazoa"/>
</dbReference>
<dbReference type="GO" id="GO:0006940">
    <property type="term" value="P:regulation of smooth muscle contraction"/>
    <property type="evidence" value="ECO:0007669"/>
    <property type="project" value="EnsemblMetazoa"/>
</dbReference>
<dbReference type="GO" id="GO:0006939">
    <property type="term" value="P:smooth muscle contraction"/>
    <property type="evidence" value="ECO:0000250"/>
    <property type="project" value="UniProtKB"/>
</dbReference>
<dbReference type="InterPro" id="IPR013152">
    <property type="entry name" value="Gastrin/cholecystokinin_CS"/>
</dbReference>
<dbReference type="InterPro" id="IPR013259">
    <property type="entry name" value="Sulfakinin"/>
</dbReference>
<dbReference type="Pfam" id="PF08257">
    <property type="entry name" value="Sulfakinin"/>
    <property type="match status" value="2"/>
</dbReference>
<dbReference type="PROSITE" id="PS00259">
    <property type="entry name" value="GASTRIN"/>
    <property type="match status" value="2"/>
</dbReference>